<protein>
    <recommendedName>
        <fullName>Monothiol glutaredoxin-7</fullName>
    </recommendedName>
</protein>
<comment type="similarity">
    <text evidence="3">Belongs to the glutaredoxin family. Monothiol subfamily.</text>
</comment>
<accession>P38068</accession>
<accession>D6VQ16</accession>
<accession>Q1P9U2</accession>
<organism>
    <name type="scientific">Saccharomyces cerevisiae (strain ATCC 204508 / S288c)</name>
    <name type="common">Baker's yeast</name>
    <dbReference type="NCBI Taxonomy" id="559292"/>
    <lineage>
        <taxon>Eukaryota</taxon>
        <taxon>Fungi</taxon>
        <taxon>Dikarya</taxon>
        <taxon>Ascomycota</taxon>
        <taxon>Saccharomycotina</taxon>
        <taxon>Saccharomycetes</taxon>
        <taxon>Saccharomycetales</taxon>
        <taxon>Saccharomycetaceae</taxon>
        <taxon>Saccharomyces</taxon>
    </lineage>
</organism>
<sequence>MAIVINKRNVRVLVITNLLLIVVFFVLRNSNASVNESITTHHPDSLVTFDNSGNAPGTHQSVHDTVNTQDKEAEEVDKNSGDAEFDAAAEYNKIMEQSPMIVFSKTGCPYSKKLKALLTNSYTFSPSYYVVELDRHEHTKELQDQIEKVTGRRTVPNVIIGGTSRGGYTEIAELHKNDELLDSFKKWSDGAFTVKANSQSESA</sequence>
<reference key="1">
    <citation type="submission" date="2006-03" db="EMBL/GenBank/DDBJ databases">
        <title>Characterization of an S. cerevisiae monothiol glutaredoxin (Grx6) gene and its expression and regulation in S. pombe.</title>
        <authorList>
            <person name="Lim C.-J."/>
            <person name="Kwon M.-S."/>
            <person name="Kim S.-J."/>
        </authorList>
    </citation>
    <scope>NUCLEOTIDE SEQUENCE [GENOMIC DNA]</scope>
</reference>
<reference key="2">
    <citation type="journal article" date="1994" name="EMBO J.">
        <title>Complete DNA sequence of yeast chromosome II.</title>
        <authorList>
            <person name="Feldmann H."/>
            <person name="Aigle M."/>
            <person name="Aljinovic G."/>
            <person name="Andre B."/>
            <person name="Baclet M.C."/>
            <person name="Barthe C."/>
            <person name="Baur A."/>
            <person name="Becam A.-M."/>
            <person name="Biteau N."/>
            <person name="Boles E."/>
            <person name="Brandt T."/>
            <person name="Brendel M."/>
            <person name="Brueckner M."/>
            <person name="Bussereau F."/>
            <person name="Christiansen C."/>
            <person name="Contreras R."/>
            <person name="Crouzet M."/>
            <person name="Cziepluch C."/>
            <person name="Demolis N."/>
            <person name="Delaveau T."/>
            <person name="Doignon F."/>
            <person name="Domdey H."/>
            <person name="Duesterhus S."/>
            <person name="Dubois E."/>
            <person name="Dujon B."/>
            <person name="El Bakkoury M."/>
            <person name="Entian K.-D."/>
            <person name="Feuermann M."/>
            <person name="Fiers W."/>
            <person name="Fobo G.M."/>
            <person name="Fritz C."/>
            <person name="Gassenhuber J."/>
            <person name="Glansdorff N."/>
            <person name="Goffeau A."/>
            <person name="Grivell L.A."/>
            <person name="de Haan M."/>
            <person name="Hein C."/>
            <person name="Herbert C.J."/>
            <person name="Hollenberg C.P."/>
            <person name="Holmstroem K."/>
            <person name="Jacq C."/>
            <person name="Jacquet M."/>
            <person name="Jauniaux J.-C."/>
            <person name="Jonniaux J.-L."/>
            <person name="Kallesoee T."/>
            <person name="Kiesau P."/>
            <person name="Kirchrath L."/>
            <person name="Koetter P."/>
            <person name="Korol S."/>
            <person name="Liebl S."/>
            <person name="Logghe M."/>
            <person name="Lohan A.J.E."/>
            <person name="Louis E.J."/>
            <person name="Li Z.Y."/>
            <person name="Maat M.J."/>
            <person name="Mallet L."/>
            <person name="Mannhaupt G."/>
            <person name="Messenguy F."/>
            <person name="Miosga T."/>
            <person name="Molemans F."/>
            <person name="Mueller S."/>
            <person name="Nasr F."/>
            <person name="Obermaier B."/>
            <person name="Perea J."/>
            <person name="Pierard A."/>
            <person name="Piravandi E."/>
            <person name="Pohl F.M."/>
            <person name="Pohl T.M."/>
            <person name="Potier S."/>
            <person name="Proft M."/>
            <person name="Purnelle B."/>
            <person name="Ramezani Rad M."/>
            <person name="Rieger M."/>
            <person name="Rose M."/>
            <person name="Schaaff-Gerstenschlaeger I."/>
            <person name="Scherens B."/>
            <person name="Schwarzlose C."/>
            <person name="Skala J."/>
            <person name="Slonimski P.P."/>
            <person name="Smits P.H.M."/>
            <person name="Souciet J.-L."/>
            <person name="Steensma H.Y."/>
            <person name="Stucka R."/>
            <person name="Urrestarazu L.A."/>
            <person name="van der Aart Q.J.M."/>
            <person name="Van Dyck L."/>
            <person name="Vassarotti A."/>
            <person name="Vetter I."/>
            <person name="Vierendeels F."/>
            <person name="Vissers S."/>
            <person name="Wagner G."/>
            <person name="de Wergifosse P."/>
            <person name="Wolfe K.H."/>
            <person name="Zagulski M."/>
            <person name="Zimmermann F.K."/>
            <person name="Mewes H.-W."/>
            <person name="Kleine K."/>
        </authorList>
    </citation>
    <scope>NUCLEOTIDE SEQUENCE [LARGE SCALE GENOMIC DNA]</scope>
    <source>
        <strain>ATCC 204508 / S288c</strain>
    </source>
</reference>
<reference key="3">
    <citation type="journal article" date="2014" name="G3 (Bethesda)">
        <title>The reference genome sequence of Saccharomyces cerevisiae: Then and now.</title>
        <authorList>
            <person name="Engel S.R."/>
            <person name="Dietrich F.S."/>
            <person name="Fisk D.G."/>
            <person name="Binkley G."/>
            <person name="Balakrishnan R."/>
            <person name="Costanzo M.C."/>
            <person name="Dwight S.S."/>
            <person name="Hitz B.C."/>
            <person name="Karra K."/>
            <person name="Nash R.S."/>
            <person name="Weng S."/>
            <person name="Wong E.D."/>
            <person name="Lloyd P."/>
            <person name="Skrzypek M.S."/>
            <person name="Miyasato S.R."/>
            <person name="Simison M."/>
            <person name="Cherry J.M."/>
        </authorList>
    </citation>
    <scope>GENOME REANNOTATION</scope>
    <source>
        <strain>ATCC 204508 / S288c</strain>
    </source>
</reference>
<reference key="4">
    <citation type="journal article" date="2012" name="Proc. Natl. Acad. Sci. U.S.A.">
        <title>N-terminal acetylome analyses and functional insights of the N-terminal acetyltransferase NatB.</title>
        <authorList>
            <person name="Van Damme P."/>
            <person name="Lasa M."/>
            <person name="Polevoda B."/>
            <person name="Gazquez C."/>
            <person name="Elosegui-Artola A."/>
            <person name="Kim D.S."/>
            <person name="De Juan-Pardo E."/>
            <person name="Demeyer K."/>
            <person name="Hole K."/>
            <person name="Larrea E."/>
            <person name="Timmerman E."/>
            <person name="Prieto J."/>
            <person name="Arnesen T."/>
            <person name="Sherman F."/>
            <person name="Gevaert K."/>
            <person name="Aldabe R."/>
        </authorList>
    </citation>
    <scope>IDENTIFICATION BY MASS SPECTROMETRY [LARGE SCALE ANALYSIS]</scope>
</reference>
<feature type="signal peptide" evidence="1">
    <location>
        <begin position="1"/>
        <end position="32"/>
    </location>
</feature>
<feature type="chain" id="PRO_0000042989" description="Monothiol glutaredoxin-7">
    <location>
        <begin position="33"/>
        <end position="203"/>
    </location>
</feature>
<feature type="domain" description="Glutaredoxin" evidence="2">
    <location>
        <begin position="88"/>
        <end position="191"/>
    </location>
</feature>
<feature type="binding site" evidence="1">
    <location>
        <position position="108"/>
    </location>
    <ligand>
        <name>[2Fe-2S] cluster</name>
        <dbReference type="ChEBI" id="CHEBI:190135"/>
        <note>ligand shared between dimeric partners</note>
    </ligand>
</feature>
<proteinExistence type="evidence at protein level"/>
<evidence type="ECO:0000255" key="1"/>
<evidence type="ECO:0000255" key="2">
    <source>
        <dbReference type="PROSITE-ProRule" id="PRU00686"/>
    </source>
</evidence>
<evidence type="ECO:0000305" key="3"/>
<gene>
    <name type="primary">GRX7</name>
    <name type="synonym">GRX6</name>
    <name type="ordered locus">YBR014C</name>
    <name type="ORF">YBR0219</name>
</gene>
<keyword id="KW-0001">2Fe-2S</keyword>
<keyword id="KW-0408">Iron</keyword>
<keyword id="KW-0411">Iron-sulfur</keyword>
<keyword id="KW-0479">Metal-binding</keyword>
<keyword id="KW-1185">Reference proteome</keyword>
<keyword id="KW-0732">Signal</keyword>
<dbReference type="EMBL" id="DQ462165">
    <property type="protein sequence ID" value="ABE68911.1"/>
    <property type="molecule type" value="Genomic_DNA"/>
</dbReference>
<dbReference type="EMBL" id="Z35883">
    <property type="protein sequence ID" value="CAA84956.1"/>
    <property type="molecule type" value="Genomic_DNA"/>
</dbReference>
<dbReference type="EMBL" id="BK006936">
    <property type="protein sequence ID" value="DAA07136.1"/>
    <property type="molecule type" value="Genomic_DNA"/>
</dbReference>
<dbReference type="PIR" id="S45869">
    <property type="entry name" value="S45869"/>
</dbReference>
<dbReference type="RefSeq" id="NP_009570.1">
    <property type="nucleotide sequence ID" value="NM_001178362.1"/>
</dbReference>
<dbReference type="SMR" id="P38068"/>
<dbReference type="BioGRID" id="32717">
    <property type="interactions" value="78"/>
</dbReference>
<dbReference type="ComplexPortal" id="CPX-6937">
    <property type="entry name" value="GRX7 iron-sulfur cluster assembly homodimer complex"/>
</dbReference>
<dbReference type="DIP" id="DIP-3884N"/>
<dbReference type="FunCoup" id="P38068">
    <property type="interactions" value="57"/>
</dbReference>
<dbReference type="IntAct" id="P38068">
    <property type="interactions" value="18"/>
</dbReference>
<dbReference type="STRING" id="4932.YBR014C"/>
<dbReference type="PaxDb" id="4932-YBR014C"/>
<dbReference type="PeptideAtlas" id="P38068"/>
<dbReference type="EnsemblFungi" id="YBR014C_mRNA">
    <property type="protein sequence ID" value="YBR014C"/>
    <property type="gene ID" value="YBR014C"/>
</dbReference>
<dbReference type="GeneID" id="852302"/>
<dbReference type="KEGG" id="sce:YBR014C"/>
<dbReference type="AGR" id="SGD:S000000218"/>
<dbReference type="SGD" id="S000000218">
    <property type="gene designation" value="GRX7"/>
</dbReference>
<dbReference type="VEuPathDB" id="FungiDB:YBR014C"/>
<dbReference type="eggNOG" id="KOG1752">
    <property type="taxonomic scope" value="Eukaryota"/>
</dbReference>
<dbReference type="GeneTree" id="ENSGT00940000176461"/>
<dbReference type="HOGENOM" id="CLU_026126_0_1_1"/>
<dbReference type="InParanoid" id="P38068"/>
<dbReference type="OMA" id="DSIMELH"/>
<dbReference type="OrthoDB" id="423313at2759"/>
<dbReference type="BioCyc" id="YEAST:G3O-28999-MONOMER"/>
<dbReference type="BioGRID-ORCS" id="852302">
    <property type="hits" value="0 hits in 10 CRISPR screens"/>
</dbReference>
<dbReference type="PRO" id="PR:P38068"/>
<dbReference type="Proteomes" id="UP000002311">
    <property type="component" value="Chromosome II"/>
</dbReference>
<dbReference type="RNAct" id="P38068">
    <property type="molecule type" value="protein"/>
</dbReference>
<dbReference type="GO" id="GO:0005801">
    <property type="term" value="C:cis-Golgi network"/>
    <property type="evidence" value="ECO:0000314"/>
    <property type="project" value="SGD"/>
</dbReference>
<dbReference type="GO" id="GO:0005737">
    <property type="term" value="C:cytoplasm"/>
    <property type="evidence" value="ECO:0000318"/>
    <property type="project" value="GO_Central"/>
</dbReference>
<dbReference type="GO" id="GO:0000324">
    <property type="term" value="C:fungal-type vacuole"/>
    <property type="evidence" value="ECO:0007005"/>
    <property type="project" value="SGD"/>
</dbReference>
<dbReference type="GO" id="GO:0005794">
    <property type="term" value="C:Golgi apparatus"/>
    <property type="evidence" value="ECO:0000314"/>
    <property type="project" value="SGD"/>
</dbReference>
<dbReference type="GO" id="GO:0005796">
    <property type="term" value="C:Golgi lumen"/>
    <property type="evidence" value="ECO:0000314"/>
    <property type="project" value="SGD"/>
</dbReference>
<dbReference type="GO" id="GO:1990229">
    <property type="term" value="C:iron-sulfur cluster assembly complex"/>
    <property type="evidence" value="ECO:0000250"/>
    <property type="project" value="ComplexPortal"/>
</dbReference>
<dbReference type="GO" id="GO:0016020">
    <property type="term" value="C:membrane"/>
    <property type="evidence" value="ECO:0000314"/>
    <property type="project" value="SGD"/>
</dbReference>
<dbReference type="GO" id="GO:0005634">
    <property type="term" value="C:nucleus"/>
    <property type="evidence" value="ECO:0000303"/>
    <property type="project" value="ComplexPortal"/>
</dbReference>
<dbReference type="GO" id="GO:0051537">
    <property type="term" value="F:2 iron, 2 sulfur cluster binding"/>
    <property type="evidence" value="ECO:0007669"/>
    <property type="project" value="UniProtKB-KW"/>
</dbReference>
<dbReference type="GO" id="GO:0015038">
    <property type="term" value="F:glutathione disulfide oxidoreductase activity"/>
    <property type="evidence" value="ECO:0000318"/>
    <property type="project" value="GO_Central"/>
</dbReference>
<dbReference type="GO" id="GO:0004362">
    <property type="term" value="F:glutathione-disulfide reductase (NADPH) activity"/>
    <property type="evidence" value="ECO:0000314"/>
    <property type="project" value="SGD"/>
</dbReference>
<dbReference type="GO" id="GO:0046872">
    <property type="term" value="F:metal ion binding"/>
    <property type="evidence" value="ECO:0007669"/>
    <property type="project" value="UniProtKB-KW"/>
</dbReference>
<dbReference type="GO" id="GO:0034599">
    <property type="term" value="P:cellular response to oxidative stress"/>
    <property type="evidence" value="ECO:0000316"/>
    <property type="project" value="SGD"/>
</dbReference>
<dbReference type="GO" id="GO:0006879">
    <property type="term" value="P:intracellular iron ion homeostasis"/>
    <property type="evidence" value="ECO:0000303"/>
    <property type="project" value="ComplexPortal"/>
</dbReference>
<dbReference type="GO" id="GO:0016226">
    <property type="term" value="P:iron-sulfur cluster assembly"/>
    <property type="evidence" value="ECO:0000303"/>
    <property type="project" value="ComplexPortal"/>
</dbReference>
<dbReference type="CDD" id="cd03419">
    <property type="entry name" value="GRX_GRXh_1_2_like"/>
    <property type="match status" value="1"/>
</dbReference>
<dbReference type="FunFam" id="3.40.30.10:FF:000093">
    <property type="entry name" value="Glutaredoxin 2"/>
    <property type="match status" value="1"/>
</dbReference>
<dbReference type="Gene3D" id="3.40.30.10">
    <property type="entry name" value="Glutaredoxin"/>
    <property type="match status" value="1"/>
</dbReference>
<dbReference type="InterPro" id="IPR002109">
    <property type="entry name" value="Glutaredoxin"/>
</dbReference>
<dbReference type="InterPro" id="IPR011899">
    <property type="entry name" value="Glutaredoxin_euk/vir"/>
</dbReference>
<dbReference type="InterPro" id="IPR014025">
    <property type="entry name" value="Glutaredoxin_subgr"/>
</dbReference>
<dbReference type="InterPro" id="IPR036249">
    <property type="entry name" value="Thioredoxin-like_sf"/>
</dbReference>
<dbReference type="NCBIfam" id="TIGR02180">
    <property type="entry name" value="GRX_euk"/>
    <property type="match status" value="1"/>
</dbReference>
<dbReference type="PANTHER" id="PTHR45694">
    <property type="entry name" value="GLUTAREDOXIN 2"/>
    <property type="match status" value="1"/>
</dbReference>
<dbReference type="PANTHER" id="PTHR45694:SF5">
    <property type="entry name" value="GLUTAREDOXIN 2"/>
    <property type="match status" value="1"/>
</dbReference>
<dbReference type="Pfam" id="PF00462">
    <property type="entry name" value="Glutaredoxin"/>
    <property type="match status" value="1"/>
</dbReference>
<dbReference type="PRINTS" id="PR00160">
    <property type="entry name" value="GLUTAREDOXIN"/>
</dbReference>
<dbReference type="SUPFAM" id="SSF52833">
    <property type="entry name" value="Thioredoxin-like"/>
    <property type="match status" value="1"/>
</dbReference>
<dbReference type="PROSITE" id="PS51354">
    <property type="entry name" value="GLUTAREDOXIN_2"/>
    <property type="match status" value="1"/>
</dbReference>
<name>GLRX7_YEAST</name>